<comment type="subcellular location">
    <subcellularLocation>
        <location evidence="4">Secreted</location>
    </subcellularLocation>
</comment>
<comment type="tissue specificity">
    <text evidence="3">Expressed mainly in lymphoid tissues including spleen, epigonal organ and circulating lymphocytes.</text>
</comment>
<protein>
    <recommendedName>
        <fullName>IgW chain C region, secreted form 2</fullName>
    </recommendedName>
</protein>
<name>IGW2_HETFR</name>
<organism>
    <name type="scientific">Heterodontus francisci</name>
    <name type="common">Horn shark</name>
    <name type="synonym">Cestracion francisci</name>
    <dbReference type="NCBI Taxonomy" id="7792"/>
    <lineage>
        <taxon>Eukaryota</taxon>
        <taxon>Metazoa</taxon>
        <taxon>Chordata</taxon>
        <taxon>Craniata</taxon>
        <taxon>Vertebrata</taxon>
        <taxon>Chondrichthyes</taxon>
        <taxon>Elasmobranchii</taxon>
        <taxon>Galeomorphii</taxon>
        <taxon>Heterodontoidea</taxon>
        <taxon>Heterodontiformes</taxon>
        <taxon>Heterodontidae</taxon>
        <taxon>Heterodontus</taxon>
    </lineage>
</organism>
<proteinExistence type="evidence at transcript level"/>
<keyword id="KW-1064">Adaptive immunity</keyword>
<keyword id="KW-0325">Glycoprotein</keyword>
<keyword id="KW-0391">Immunity</keyword>
<keyword id="KW-1280">Immunoglobulin</keyword>
<keyword id="KW-0964">Secreted</keyword>
<sequence length="133" mass="14698">VISGFYPDSVQVSWKKDRVDQSGVVLHSKQRNDSTFETVSYLTVPVVEWTTGDVYTCEVSHTGSRFNDRISMRYQKGGTVNLPVPGGNTPCTCPPSSCSGCMPKLVYQTDLNVTLENGGQLQYNCHQQACKIK</sequence>
<dbReference type="SMR" id="P83743"/>
<dbReference type="GO" id="GO:0005576">
    <property type="term" value="C:extracellular region"/>
    <property type="evidence" value="ECO:0007669"/>
    <property type="project" value="UniProtKB-SubCell"/>
</dbReference>
<dbReference type="GO" id="GO:0019814">
    <property type="term" value="C:immunoglobulin complex"/>
    <property type="evidence" value="ECO:0007669"/>
    <property type="project" value="UniProtKB-KW"/>
</dbReference>
<dbReference type="GO" id="GO:0002250">
    <property type="term" value="P:adaptive immune response"/>
    <property type="evidence" value="ECO:0007669"/>
    <property type="project" value="UniProtKB-KW"/>
</dbReference>
<dbReference type="CDD" id="cd00098">
    <property type="entry name" value="IgC1"/>
    <property type="match status" value="1"/>
</dbReference>
<dbReference type="Gene3D" id="2.60.40.10">
    <property type="entry name" value="Immunoglobulins"/>
    <property type="match status" value="1"/>
</dbReference>
<dbReference type="InterPro" id="IPR007110">
    <property type="entry name" value="Ig-like_dom"/>
</dbReference>
<dbReference type="InterPro" id="IPR036179">
    <property type="entry name" value="Ig-like_dom_sf"/>
</dbReference>
<dbReference type="InterPro" id="IPR013783">
    <property type="entry name" value="Ig-like_fold"/>
</dbReference>
<dbReference type="InterPro" id="IPR003006">
    <property type="entry name" value="Ig/MHC_CS"/>
</dbReference>
<dbReference type="InterPro" id="IPR003597">
    <property type="entry name" value="Ig_C1-set"/>
</dbReference>
<dbReference type="InterPro" id="IPR050380">
    <property type="entry name" value="Immune_Resp_Modulators"/>
</dbReference>
<dbReference type="PANTHER" id="PTHR23411">
    <property type="entry name" value="TAPASIN"/>
    <property type="match status" value="1"/>
</dbReference>
<dbReference type="Pfam" id="PF07654">
    <property type="entry name" value="C1-set"/>
    <property type="match status" value="1"/>
</dbReference>
<dbReference type="SMART" id="SM00407">
    <property type="entry name" value="IGc1"/>
    <property type="match status" value="1"/>
</dbReference>
<dbReference type="SUPFAM" id="SSF48726">
    <property type="entry name" value="Immunoglobulin"/>
    <property type="match status" value="1"/>
</dbReference>
<dbReference type="PROSITE" id="PS50835">
    <property type="entry name" value="IG_LIKE"/>
    <property type="match status" value="1"/>
</dbReference>
<dbReference type="PROSITE" id="PS00290">
    <property type="entry name" value="IG_MHC"/>
    <property type="match status" value="1"/>
</dbReference>
<feature type="chain" id="PRO_0000059864" description="IgW chain C region, secreted form 2">
    <location>
        <begin position="1" status="less than"/>
        <end position="133"/>
    </location>
</feature>
<feature type="domain" description="Ig-like" evidence="1">
    <location>
        <begin position="1" status="less than"/>
        <end position="71"/>
    </location>
</feature>
<feature type="region of interest" description="Secretory tail">
    <location>
        <begin position="76"/>
        <end position="133"/>
    </location>
</feature>
<feature type="glycosylation site" description="N-linked (GlcNAc...) asparagine" evidence="1">
    <location>
        <position position="32"/>
    </location>
</feature>
<feature type="glycosylation site" description="N-linked (GlcNAc...) asparagine" evidence="1">
    <location>
        <position position="112"/>
    </location>
</feature>
<feature type="non-terminal residue" evidence="4">
    <location>
        <position position="1"/>
    </location>
</feature>
<accession>P83743</accession>
<reference evidence="5" key="1">
    <citation type="journal article" date="2004" name="J. Immunol.">
        <title>Unprecedented multiplicity of Ig transmembrane and secretory mRNA forms in the cartilaginous fish.</title>
        <authorList>
            <person name="Rumfelt L.L."/>
            <person name="Diaz M."/>
            <person name="Lohr R.L."/>
            <person name="Mochon E."/>
            <person name="Flajnik M.F."/>
        </authorList>
    </citation>
    <scope>NUCLEOTIDE SEQUENCE</scope>
    <source>
        <tissue evidence="2">Epigonal organ</tissue>
    </source>
</reference>
<reference evidence="5" key="2">
    <citation type="submission" date="2004-01" db="UniProtKB">
        <authorList>
            <person name="Rumfelt L.L."/>
            <person name="Diaz M."/>
            <person name="Lohr R.L."/>
            <person name="Mochon E."/>
            <person name="Flajnik M.F."/>
        </authorList>
    </citation>
    <scope>TISSUE SPECIFICITY</scope>
</reference>
<evidence type="ECO:0000255" key="1"/>
<evidence type="ECO:0000269" key="2">
    <source>
    </source>
</evidence>
<evidence type="ECO:0000269" key="3">
    <source ref="2"/>
</evidence>
<evidence type="ECO:0000303" key="4">
    <source>
    </source>
</evidence>
<evidence type="ECO:0000305" key="5"/>